<protein>
    <recommendedName>
        <fullName evidence="1">Isoleucine--tRNA ligase 1</fullName>
        <ecNumber evidence="1">6.1.1.5</ecNumber>
    </recommendedName>
    <alternativeName>
        <fullName evidence="1">Isoleucyl-tRNA synthetase 1</fullName>
        <shortName evidence="1">IleRS 1</shortName>
    </alternativeName>
</protein>
<name>SYI1_BACC1</name>
<organism>
    <name type="scientific">Bacillus cereus (strain ATCC 10987 / NRS 248)</name>
    <dbReference type="NCBI Taxonomy" id="222523"/>
    <lineage>
        <taxon>Bacteria</taxon>
        <taxon>Bacillati</taxon>
        <taxon>Bacillota</taxon>
        <taxon>Bacilli</taxon>
        <taxon>Bacillales</taxon>
        <taxon>Bacillaceae</taxon>
        <taxon>Bacillus</taxon>
        <taxon>Bacillus cereus group</taxon>
    </lineage>
</organism>
<comment type="function">
    <text evidence="1">Catalyzes the attachment of isoleucine to tRNA(Ile). As IleRS can inadvertently accommodate and process structurally similar amino acids such as valine, to avoid such errors it has two additional distinct tRNA(Ile)-dependent editing activities. One activity is designated as 'pretransfer' editing and involves the hydrolysis of activated Val-AMP. The other activity is designated 'posttransfer' editing and involves deacylation of mischarged Val-tRNA(Ile).</text>
</comment>
<comment type="catalytic activity">
    <reaction evidence="1">
        <text>tRNA(Ile) + L-isoleucine + ATP = L-isoleucyl-tRNA(Ile) + AMP + diphosphate</text>
        <dbReference type="Rhea" id="RHEA:11060"/>
        <dbReference type="Rhea" id="RHEA-COMP:9666"/>
        <dbReference type="Rhea" id="RHEA-COMP:9695"/>
        <dbReference type="ChEBI" id="CHEBI:30616"/>
        <dbReference type="ChEBI" id="CHEBI:33019"/>
        <dbReference type="ChEBI" id="CHEBI:58045"/>
        <dbReference type="ChEBI" id="CHEBI:78442"/>
        <dbReference type="ChEBI" id="CHEBI:78528"/>
        <dbReference type="ChEBI" id="CHEBI:456215"/>
        <dbReference type="EC" id="6.1.1.5"/>
    </reaction>
</comment>
<comment type="cofactor">
    <cofactor evidence="1">
        <name>Zn(2+)</name>
        <dbReference type="ChEBI" id="CHEBI:29105"/>
    </cofactor>
    <text evidence="1">Binds 1 zinc ion per subunit.</text>
</comment>
<comment type="subunit">
    <text evidence="1">Monomer.</text>
</comment>
<comment type="subcellular location">
    <subcellularLocation>
        <location evidence="1">Cytoplasm</location>
    </subcellularLocation>
</comment>
<comment type="domain">
    <text evidence="1">IleRS has two distinct active sites: one for aminoacylation and one for editing. The misactivated valine is translocated from the active site to the editing site, which sterically excludes the correctly activated isoleucine. The single editing site contains two valyl binding pockets, one specific for each substrate (Val-AMP or Val-tRNA(Ile)).</text>
</comment>
<comment type="similarity">
    <text evidence="1">Belongs to the class-I aminoacyl-tRNA synthetase family. IleS type 1 subfamily.</text>
</comment>
<proteinExistence type="inferred from homology"/>
<reference key="1">
    <citation type="journal article" date="2004" name="Nucleic Acids Res.">
        <title>The genome sequence of Bacillus cereus ATCC 10987 reveals metabolic adaptations and a large plasmid related to Bacillus anthracis pXO1.</title>
        <authorList>
            <person name="Rasko D.A."/>
            <person name="Ravel J."/>
            <person name="Oekstad O.A."/>
            <person name="Helgason E."/>
            <person name="Cer R.Z."/>
            <person name="Jiang L."/>
            <person name="Shores K.A."/>
            <person name="Fouts D.E."/>
            <person name="Tourasse N.J."/>
            <person name="Angiuoli S.V."/>
            <person name="Kolonay J.F."/>
            <person name="Nelson W.C."/>
            <person name="Kolstoe A.-B."/>
            <person name="Fraser C.M."/>
            <person name="Read T.D."/>
        </authorList>
    </citation>
    <scope>NUCLEOTIDE SEQUENCE [LARGE SCALE GENOMIC DNA]</scope>
    <source>
        <strain>ATCC 10987 / NRS 248</strain>
    </source>
</reference>
<feature type="chain" id="PRO_0000098345" description="Isoleucine--tRNA ligase 1">
    <location>
        <begin position="1"/>
        <end position="921"/>
    </location>
</feature>
<feature type="short sequence motif" description="'HIGH' region">
    <location>
        <begin position="57"/>
        <end position="67"/>
    </location>
</feature>
<feature type="short sequence motif" description="'KMSKS' region">
    <location>
        <begin position="593"/>
        <end position="597"/>
    </location>
</feature>
<feature type="binding site" evidence="1">
    <location>
        <position position="552"/>
    </location>
    <ligand>
        <name>L-isoleucyl-5'-AMP</name>
        <dbReference type="ChEBI" id="CHEBI:178002"/>
    </ligand>
</feature>
<feature type="binding site" evidence="1">
    <location>
        <position position="596"/>
    </location>
    <ligand>
        <name>ATP</name>
        <dbReference type="ChEBI" id="CHEBI:30616"/>
    </ligand>
</feature>
<feature type="binding site" evidence="1">
    <location>
        <position position="888"/>
    </location>
    <ligand>
        <name>Zn(2+)</name>
        <dbReference type="ChEBI" id="CHEBI:29105"/>
    </ligand>
</feature>
<feature type="binding site" evidence="1">
    <location>
        <position position="891"/>
    </location>
    <ligand>
        <name>Zn(2+)</name>
        <dbReference type="ChEBI" id="CHEBI:29105"/>
    </ligand>
</feature>
<feature type="binding site" evidence="1">
    <location>
        <position position="908"/>
    </location>
    <ligand>
        <name>Zn(2+)</name>
        <dbReference type="ChEBI" id="CHEBI:29105"/>
    </ligand>
</feature>
<feature type="binding site" evidence="1">
    <location>
        <position position="911"/>
    </location>
    <ligand>
        <name>Zn(2+)</name>
        <dbReference type="ChEBI" id="CHEBI:29105"/>
    </ligand>
</feature>
<keyword id="KW-0030">Aminoacyl-tRNA synthetase</keyword>
<keyword id="KW-0067">ATP-binding</keyword>
<keyword id="KW-0963">Cytoplasm</keyword>
<keyword id="KW-0436">Ligase</keyword>
<keyword id="KW-0479">Metal-binding</keyword>
<keyword id="KW-0547">Nucleotide-binding</keyword>
<keyword id="KW-0648">Protein biosynthesis</keyword>
<keyword id="KW-0862">Zinc</keyword>
<sequence>MEYKNTLLMPKTEFPMRGNLPKREPAMQEKWAEMNIYEKVQEHTKGRPLFVLHDGPPYANGDIHMGHALNKVLKDFIVRYKSMTGFCAPYVPGWDTHGLPIEQALTNKGVKRKEMTVAEFRKLCAEYAYEQVERQREQFKRLGVRADWDNPYITLEPAYEAQQIKVFGDMAKKGYIYKGQKPVYWSPTSESALAEAEIEYQDKKSASIYVAFPVKDGKNVLEGDEKYIIWTTTPWTLPANLGISVHPELEYAIVKVNDEKYIIASELFETVAKTLEWENAEVVKTVKGSELEYTVAKHPFYDRDSLVMLGDHVTTDAGTGCVHTAPGHGEDDFIVGKKYGLEVLCPVDDKGVLTEEAPGFEGLFYDKANKPITEKLEEVGALLKLTFITHSYPHDWRTKKPIIFRATAQWFASIEAFRKELLEAVAETKWVPAWGETRLHNMVRDRGDWCISRQRAWGVPIPVFYAENGDPIITDETINHVADLFREHGSNVWFEREAKDLLPEGFTHPGSPNGEFRKETDIMDVWFDSGSSHQAVLEERDDLQRPADLYLEGSDQYRGWFNSSLSTAVAVTGKAPYKGVLSHGFVLDGEGRKMSKSIGNIVVPKKIMDQLGGDILRLWVSSVDYQSDVRISDDILKQVAEVYRKIRNTFRFLLGNLDDFKPSENTVAVAELREVDRYMLVKLNDLITKVKEAYETYDFAAVYHAIHNFCTIDLSSFYLDFAKDILYIEGANHEDRRAIQTVLYDVLVALTKLVTPILPHTADEVWPYIPGVTEESVQLTDMPEAVQLDGAEALKTKWDAFMTLRDDVLKALEVARNEKVIGKSLNASITLYPTAEMKAMLESINEDLKQLFIVSEYKLGGMMEEAPADAPKYEHTAVVVAQATGETCERCWVVSETIGKDAEHETLCERCATVVKENYVK</sequence>
<accession>Q732H4</accession>
<evidence type="ECO:0000255" key="1">
    <source>
        <dbReference type="HAMAP-Rule" id="MF_02002"/>
    </source>
</evidence>
<gene>
    <name evidence="1" type="primary">ileS1</name>
    <name type="ordered locus">BCE_3940</name>
</gene>
<dbReference type="EC" id="6.1.1.5" evidence="1"/>
<dbReference type="EMBL" id="AE017194">
    <property type="protein sequence ID" value="AAS42843.1"/>
    <property type="molecule type" value="Genomic_DNA"/>
</dbReference>
<dbReference type="SMR" id="Q732H4"/>
<dbReference type="KEGG" id="bca:BCE_3940"/>
<dbReference type="HOGENOM" id="CLU_001493_7_0_9"/>
<dbReference type="Proteomes" id="UP000002527">
    <property type="component" value="Chromosome"/>
</dbReference>
<dbReference type="GO" id="GO:0005829">
    <property type="term" value="C:cytosol"/>
    <property type="evidence" value="ECO:0007669"/>
    <property type="project" value="TreeGrafter"/>
</dbReference>
<dbReference type="GO" id="GO:0002161">
    <property type="term" value="F:aminoacyl-tRNA deacylase activity"/>
    <property type="evidence" value="ECO:0007669"/>
    <property type="project" value="InterPro"/>
</dbReference>
<dbReference type="GO" id="GO:0005524">
    <property type="term" value="F:ATP binding"/>
    <property type="evidence" value="ECO:0007669"/>
    <property type="project" value="UniProtKB-UniRule"/>
</dbReference>
<dbReference type="GO" id="GO:0004822">
    <property type="term" value="F:isoleucine-tRNA ligase activity"/>
    <property type="evidence" value="ECO:0007669"/>
    <property type="project" value="UniProtKB-UniRule"/>
</dbReference>
<dbReference type="GO" id="GO:0000049">
    <property type="term" value="F:tRNA binding"/>
    <property type="evidence" value="ECO:0007669"/>
    <property type="project" value="InterPro"/>
</dbReference>
<dbReference type="GO" id="GO:0008270">
    <property type="term" value="F:zinc ion binding"/>
    <property type="evidence" value="ECO:0007669"/>
    <property type="project" value="UniProtKB-UniRule"/>
</dbReference>
<dbReference type="GO" id="GO:0006428">
    <property type="term" value="P:isoleucyl-tRNA aminoacylation"/>
    <property type="evidence" value="ECO:0007669"/>
    <property type="project" value="UniProtKB-UniRule"/>
</dbReference>
<dbReference type="CDD" id="cd07960">
    <property type="entry name" value="Anticodon_Ia_Ile_BEm"/>
    <property type="match status" value="1"/>
</dbReference>
<dbReference type="CDD" id="cd00818">
    <property type="entry name" value="IleRS_core"/>
    <property type="match status" value="1"/>
</dbReference>
<dbReference type="FunFam" id="1.10.10.830:FF:000001">
    <property type="entry name" value="Isoleucine--tRNA ligase"/>
    <property type="match status" value="1"/>
</dbReference>
<dbReference type="FunFam" id="1.10.730.20:FF:000001">
    <property type="entry name" value="Isoleucine--tRNA ligase"/>
    <property type="match status" value="1"/>
</dbReference>
<dbReference type="FunFam" id="3.40.50.620:FF:000152">
    <property type="entry name" value="Isoleucine--tRNA ligase"/>
    <property type="match status" value="1"/>
</dbReference>
<dbReference type="FunFam" id="3.90.740.10:FF:000006">
    <property type="entry name" value="Isoleucine--tRNA ligase"/>
    <property type="match status" value="1"/>
</dbReference>
<dbReference type="Gene3D" id="1.10.730.20">
    <property type="match status" value="1"/>
</dbReference>
<dbReference type="Gene3D" id="3.40.50.620">
    <property type="entry name" value="HUPs"/>
    <property type="match status" value="2"/>
</dbReference>
<dbReference type="Gene3D" id="1.10.10.830">
    <property type="entry name" value="Ile-tRNA synthetase CP2 domain-like"/>
    <property type="match status" value="1"/>
</dbReference>
<dbReference type="Gene3D" id="3.90.740.10">
    <property type="entry name" value="Valyl/Leucyl/Isoleucyl-tRNA synthetase, editing domain"/>
    <property type="match status" value="1"/>
</dbReference>
<dbReference type="HAMAP" id="MF_02002">
    <property type="entry name" value="Ile_tRNA_synth_type1"/>
    <property type="match status" value="1"/>
</dbReference>
<dbReference type="InterPro" id="IPR001412">
    <property type="entry name" value="aa-tRNA-synth_I_CS"/>
</dbReference>
<dbReference type="InterPro" id="IPR002300">
    <property type="entry name" value="aa-tRNA-synth_Ia"/>
</dbReference>
<dbReference type="InterPro" id="IPR033708">
    <property type="entry name" value="Anticodon_Ile_BEm"/>
</dbReference>
<dbReference type="InterPro" id="IPR002301">
    <property type="entry name" value="Ile-tRNA-ligase"/>
</dbReference>
<dbReference type="InterPro" id="IPR023585">
    <property type="entry name" value="Ile-tRNA-ligase_type1"/>
</dbReference>
<dbReference type="InterPro" id="IPR050081">
    <property type="entry name" value="Ile-tRNA_ligase"/>
</dbReference>
<dbReference type="InterPro" id="IPR013155">
    <property type="entry name" value="M/V/L/I-tRNA-synth_anticd-bd"/>
</dbReference>
<dbReference type="InterPro" id="IPR014729">
    <property type="entry name" value="Rossmann-like_a/b/a_fold"/>
</dbReference>
<dbReference type="InterPro" id="IPR009080">
    <property type="entry name" value="tRNAsynth_Ia_anticodon-bd"/>
</dbReference>
<dbReference type="InterPro" id="IPR009008">
    <property type="entry name" value="Val/Leu/Ile-tRNA-synth_edit"/>
</dbReference>
<dbReference type="InterPro" id="IPR010663">
    <property type="entry name" value="Znf_FPG/IleRS"/>
</dbReference>
<dbReference type="NCBIfam" id="TIGR00392">
    <property type="entry name" value="ileS"/>
    <property type="match status" value="1"/>
</dbReference>
<dbReference type="PANTHER" id="PTHR42765:SF1">
    <property type="entry name" value="ISOLEUCINE--TRNA LIGASE, MITOCHONDRIAL"/>
    <property type="match status" value="1"/>
</dbReference>
<dbReference type="PANTHER" id="PTHR42765">
    <property type="entry name" value="SOLEUCYL-TRNA SYNTHETASE"/>
    <property type="match status" value="1"/>
</dbReference>
<dbReference type="Pfam" id="PF08264">
    <property type="entry name" value="Anticodon_1"/>
    <property type="match status" value="1"/>
</dbReference>
<dbReference type="Pfam" id="PF00133">
    <property type="entry name" value="tRNA-synt_1"/>
    <property type="match status" value="1"/>
</dbReference>
<dbReference type="Pfam" id="PF06827">
    <property type="entry name" value="zf-FPG_IleRS"/>
    <property type="match status" value="1"/>
</dbReference>
<dbReference type="PRINTS" id="PR00984">
    <property type="entry name" value="TRNASYNTHILE"/>
</dbReference>
<dbReference type="SUPFAM" id="SSF47323">
    <property type="entry name" value="Anticodon-binding domain of a subclass of class I aminoacyl-tRNA synthetases"/>
    <property type="match status" value="1"/>
</dbReference>
<dbReference type="SUPFAM" id="SSF52374">
    <property type="entry name" value="Nucleotidylyl transferase"/>
    <property type="match status" value="1"/>
</dbReference>
<dbReference type="SUPFAM" id="SSF50677">
    <property type="entry name" value="ValRS/IleRS/LeuRS editing domain"/>
    <property type="match status" value="1"/>
</dbReference>
<dbReference type="PROSITE" id="PS00178">
    <property type="entry name" value="AA_TRNA_LIGASE_I"/>
    <property type="match status" value="1"/>
</dbReference>